<feature type="chain" id="PRO_0000134677" description="Orotidine 5'-phosphate decarboxylase">
    <location>
        <begin position="1"/>
        <end position="265"/>
    </location>
</feature>
<feature type="active site" description="Proton donor" evidence="2">
    <location>
        <position position="93"/>
    </location>
</feature>
<feature type="binding site" evidence="1">
    <location>
        <position position="38"/>
    </location>
    <ligand>
        <name>substrate</name>
    </ligand>
</feature>
<feature type="binding site" evidence="1">
    <location>
        <begin position="60"/>
        <end position="62"/>
    </location>
    <ligand>
        <name>substrate</name>
    </ligand>
</feature>
<feature type="binding site" evidence="1">
    <location>
        <begin position="91"/>
        <end position="100"/>
    </location>
    <ligand>
        <name>substrate</name>
    </ligand>
</feature>
<feature type="binding site" evidence="1">
    <location>
        <position position="213"/>
    </location>
    <ligand>
        <name>substrate</name>
    </ligand>
</feature>
<feature type="binding site" evidence="1">
    <location>
        <position position="232"/>
    </location>
    <ligand>
        <name>substrate</name>
    </ligand>
</feature>
<reference key="1">
    <citation type="journal article" date="2002" name="Mol. Genet. Genomics">
        <title>Homologous recombination and double-strand break repair in the transformation of Rhizopus oryzae.</title>
        <authorList>
            <person name="Skory C.D."/>
        </authorList>
    </citation>
    <scope>NUCLEOTIDE SEQUENCE [GENOMIC DNA]</scope>
    <source>
        <strain>ATCC 9363 / NRRL 395</strain>
    </source>
</reference>
<organism>
    <name type="scientific">Rhizopus oryzae</name>
    <name type="common">Mucormycosis agent</name>
    <name type="synonym">Rhizopus arrhizus var. delemar</name>
    <dbReference type="NCBI Taxonomy" id="64495"/>
    <lineage>
        <taxon>Eukaryota</taxon>
        <taxon>Fungi</taxon>
        <taxon>Fungi incertae sedis</taxon>
        <taxon>Mucoromycota</taxon>
        <taxon>Mucoromycotina</taxon>
        <taxon>Mucoromycetes</taxon>
        <taxon>Mucorales</taxon>
        <taxon>Mucorineae</taxon>
        <taxon>Rhizopodaceae</taxon>
        <taxon>Rhizopus</taxon>
    </lineage>
</organism>
<dbReference type="EC" id="4.1.1.23"/>
<dbReference type="EMBL" id="AF497632">
    <property type="protein sequence ID" value="AAN78311.1"/>
    <property type="molecule type" value="Genomic_DNA"/>
</dbReference>
<dbReference type="SMR" id="Q71HN5"/>
<dbReference type="OMA" id="CLIKTHI"/>
<dbReference type="OrthoDB" id="10263753at2759"/>
<dbReference type="PhylomeDB" id="Q71HN5"/>
<dbReference type="UniPathway" id="UPA00070">
    <property type="reaction ID" value="UER00120"/>
</dbReference>
<dbReference type="GO" id="GO:0004588">
    <property type="term" value="F:orotate phosphoribosyltransferase activity"/>
    <property type="evidence" value="ECO:0007669"/>
    <property type="project" value="TreeGrafter"/>
</dbReference>
<dbReference type="GO" id="GO:0004590">
    <property type="term" value="F:orotidine-5'-phosphate decarboxylase activity"/>
    <property type="evidence" value="ECO:0007669"/>
    <property type="project" value="UniProtKB-EC"/>
</dbReference>
<dbReference type="GO" id="GO:0006207">
    <property type="term" value="P:'de novo' pyrimidine nucleobase biosynthetic process"/>
    <property type="evidence" value="ECO:0007669"/>
    <property type="project" value="InterPro"/>
</dbReference>
<dbReference type="GO" id="GO:0044205">
    <property type="term" value="P:'de novo' UMP biosynthetic process"/>
    <property type="evidence" value="ECO:0007669"/>
    <property type="project" value="UniProtKB-UniPathway"/>
</dbReference>
<dbReference type="CDD" id="cd04725">
    <property type="entry name" value="OMP_decarboxylase_like"/>
    <property type="match status" value="1"/>
</dbReference>
<dbReference type="FunFam" id="3.20.20.70:FF:000114">
    <property type="entry name" value="Decarboxylase,orotidine phosphate"/>
    <property type="match status" value="1"/>
</dbReference>
<dbReference type="Gene3D" id="3.20.20.70">
    <property type="entry name" value="Aldolase class I"/>
    <property type="match status" value="1"/>
</dbReference>
<dbReference type="InterPro" id="IPR013785">
    <property type="entry name" value="Aldolase_TIM"/>
</dbReference>
<dbReference type="InterPro" id="IPR014732">
    <property type="entry name" value="OMPdecase"/>
</dbReference>
<dbReference type="InterPro" id="IPR018089">
    <property type="entry name" value="OMPdecase_AS"/>
</dbReference>
<dbReference type="InterPro" id="IPR001754">
    <property type="entry name" value="OMPdeCOase_dom"/>
</dbReference>
<dbReference type="InterPro" id="IPR011060">
    <property type="entry name" value="RibuloseP-bd_barrel"/>
</dbReference>
<dbReference type="NCBIfam" id="TIGR01740">
    <property type="entry name" value="pyrF"/>
    <property type="match status" value="1"/>
</dbReference>
<dbReference type="PANTHER" id="PTHR19278">
    <property type="entry name" value="OROTATE PHOSPHORIBOSYLTRANSFERASE"/>
    <property type="match status" value="1"/>
</dbReference>
<dbReference type="PANTHER" id="PTHR19278:SF9">
    <property type="entry name" value="URIDINE 5'-MONOPHOSPHATE SYNTHASE"/>
    <property type="match status" value="1"/>
</dbReference>
<dbReference type="Pfam" id="PF00215">
    <property type="entry name" value="OMPdecase"/>
    <property type="match status" value="1"/>
</dbReference>
<dbReference type="SMART" id="SM00934">
    <property type="entry name" value="OMPdecase"/>
    <property type="match status" value="1"/>
</dbReference>
<dbReference type="SUPFAM" id="SSF51366">
    <property type="entry name" value="Ribulose-phoshate binding barrel"/>
    <property type="match status" value="1"/>
</dbReference>
<dbReference type="PROSITE" id="PS00156">
    <property type="entry name" value="OMPDECASE"/>
    <property type="match status" value="1"/>
</dbReference>
<accession>Q71HN5</accession>
<evidence type="ECO:0000250" key="1"/>
<evidence type="ECO:0000255" key="2">
    <source>
        <dbReference type="PROSITE-ProRule" id="PRU10110"/>
    </source>
</evidence>
<evidence type="ECO:0000305" key="3"/>
<gene>
    <name type="primary">pyrG</name>
</gene>
<protein>
    <recommendedName>
        <fullName>Orotidine 5'-phosphate decarboxylase</fullName>
        <ecNumber>4.1.1.23</ecNumber>
    </recommendedName>
    <alternativeName>
        <fullName>OMP decarboxylase</fullName>
        <shortName>OMPDCase</shortName>
        <shortName>OMPdecase</shortName>
    </alternativeName>
    <alternativeName>
        <fullName>Uridine 5'-monophosphate synthase</fullName>
        <shortName>UMP synthase</shortName>
    </alternativeName>
</protein>
<sequence length="265" mass="29611">MNTYKPYSERAKQHSNACARSLLELMERKQTNLSVAVDVTTKKELISIADAIGPYICVLKTHIDIVEDFDADLIQQLQELAKKHDFLFFEDRKFADIGNTVKHQYANGIYKIASWSHITNAHTVPGEGIIKGLAEVGLPLGRGLLLLAEMSSKGALTKGSYTTDSVEMARRNKDFVFGFIAQNKMNQYDDEDFIVMSPGVGLDVKGDGLGQQYRTPREVIVESGADVIIVGRGIYGQPDKLVEQAQRYRQAGWDAYLERLALHNK</sequence>
<name>PYRF_RHIOR</name>
<keyword id="KW-0210">Decarboxylase</keyword>
<keyword id="KW-0456">Lyase</keyword>
<keyword id="KW-0665">Pyrimidine biosynthesis</keyword>
<comment type="catalytic activity">
    <reaction evidence="2">
        <text>orotidine 5'-phosphate + H(+) = UMP + CO2</text>
        <dbReference type="Rhea" id="RHEA:11596"/>
        <dbReference type="ChEBI" id="CHEBI:15378"/>
        <dbReference type="ChEBI" id="CHEBI:16526"/>
        <dbReference type="ChEBI" id="CHEBI:57538"/>
        <dbReference type="ChEBI" id="CHEBI:57865"/>
        <dbReference type="EC" id="4.1.1.23"/>
    </reaction>
</comment>
<comment type="pathway">
    <text>Pyrimidine metabolism; UMP biosynthesis via de novo pathway; UMP from orotate: step 2/2.</text>
</comment>
<comment type="similarity">
    <text evidence="3">Belongs to the OMP decarboxylase family.</text>
</comment>
<proteinExistence type="inferred from homology"/>